<reference key="1">
    <citation type="submission" date="2008-03" db="EMBL/GenBank/DDBJ databases">
        <title>Complete sequence of chromosome of Methylobacterium radiotolerans JCM 2831.</title>
        <authorList>
            <consortium name="US DOE Joint Genome Institute"/>
            <person name="Copeland A."/>
            <person name="Lucas S."/>
            <person name="Lapidus A."/>
            <person name="Glavina del Rio T."/>
            <person name="Dalin E."/>
            <person name="Tice H."/>
            <person name="Bruce D."/>
            <person name="Goodwin L."/>
            <person name="Pitluck S."/>
            <person name="Kiss H."/>
            <person name="Brettin T."/>
            <person name="Detter J.C."/>
            <person name="Han C."/>
            <person name="Kuske C.R."/>
            <person name="Schmutz J."/>
            <person name="Larimer F."/>
            <person name="Land M."/>
            <person name="Hauser L."/>
            <person name="Kyrpides N."/>
            <person name="Mikhailova N."/>
            <person name="Marx C.J."/>
            <person name="Richardson P."/>
        </authorList>
    </citation>
    <scope>NUCLEOTIDE SEQUENCE [LARGE SCALE GENOMIC DNA]</scope>
    <source>
        <strain>ATCC 27329 / DSM 1819 / JCM 2831 / NBRC 15690 / NCIMB 10815 / 0-1</strain>
    </source>
</reference>
<dbReference type="EC" id="6.1.1.17" evidence="1"/>
<dbReference type="EMBL" id="CP001001">
    <property type="protein sequence ID" value="ACB27508.1"/>
    <property type="molecule type" value="Genomic_DNA"/>
</dbReference>
<dbReference type="RefSeq" id="WP_012322451.1">
    <property type="nucleotide sequence ID" value="NC_010505.1"/>
</dbReference>
<dbReference type="SMR" id="B1M0I6"/>
<dbReference type="STRING" id="426355.Mrad2831_5563"/>
<dbReference type="GeneID" id="6141637"/>
<dbReference type="KEGG" id="mrd:Mrad2831_5563"/>
<dbReference type="PATRIC" id="fig|426355.14.peg.5627"/>
<dbReference type="eggNOG" id="COG0008">
    <property type="taxonomic scope" value="Bacteria"/>
</dbReference>
<dbReference type="HOGENOM" id="CLU_015768_6_1_5"/>
<dbReference type="OrthoDB" id="9807503at2"/>
<dbReference type="Proteomes" id="UP000006589">
    <property type="component" value="Chromosome"/>
</dbReference>
<dbReference type="GO" id="GO:0005737">
    <property type="term" value="C:cytoplasm"/>
    <property type="evidence" value="ECO:0007669"/>
    <property type="project" value="UniProtKB-SubCell"/>
</dbReference>
<dbReference type="GO" id="GO:0005524">
    <property type="term" value="F:ATP binding"/>
    <property type="evidence" value="ECO:0007669"/>
    <property type="project" value="UniProtKB-UniRule"/>
</dbReference>
<dbReference type="GO" id="GO:0004818">
    <property type="term" value="F:glutamate-tRNA ligase activity"/>
    <property type="evidence" value="ECO:0007669"/>
    <property type="project" value="UniProtKB-UniRule"/>
</dbReference>
<dbReference type="GO" id="GO:0000049">
    <property type="term" value="F:tRNA binding"/>
    <property type="evidence" value="ECO:0007669"/>
    <property type="project" value="InterPro"/>
</dbReference>
<dbReference type="GO" id="GO:0006424">
    <property type="term" value="P:glutamyl-tRNA aminoacylation"/>
    <property type="evidence" value="ECO:0007669"/>
    <property type="project" value="UniProtKB-UniRule"/>
</dbReference>
<dbReference type="Gene3D" id="1.10.10.350">
    <property type="match status" value="1"/>
</dbReference>
<dbReference type="Gene3D" id="3.40.50.620">
    <property type="entry name" value="HUPs"/>
    <property type="match status" value="1"/>
</dbReference>
<dbReference type="HAMAP" id="MF_00022">
    <property type="entry name" value="Glu_tRNA_synth_type1"/>
    <property type="match status" value="1"/>
</dbReference>
<dbReference type="InterPro" id="IPR045462">
    <property type="entry name" value="aa-tRNA-synth_I_cd-bd"/>
</dbReference>
<dbReference type="InterPro" id="IPR020751">
    <property type="entry name" value="aa-tRNA-synth_I_codon-bd_sub2"/>
</dbReference>
<dbReference type="InterPro" id="IPR001412">
    <property type="entry name" value="aa-tRNA-synth_I_CS"/>
</dbReference>
<dbReference type="InterPro" id="IPR008925">
    <property type="entry name" value="aa_tRNA-synth_I_cd-bd_sf"/>
</dbReference>
<dbReference type="InterPro" id="IPR004527">
    <property type="entry name" value="Glu-tRNA-ligase_bac/mito"/>
</dbReference>
<dbReference type="InterPro" id="IPR000924">
    <property type="entry name" value="Glu/Gln-tRNA-synth"/>
</dbReference>
<dbReference type="InterPro" id="IPR020058">
    <property type="entry name" value="Glu/Gln-tRNA-synth_Ib_cat-dom"/>
</dbReference>
<dbReference type="InterPro" id="IPR049940">
    <property type="entry name" value="GluQ/Sye"/>
</dbReference>
<dbReference type="InterPro" id="IPR014729">
    <property type="entry name" value="Rossmann-like_a/b/a_fold"/>
</dbReference>
<dbReference type="PANTHER" id="PTHR43311">
    <property type="entry name" value="GLUTAMATE--TRNA LIGASE"/>
    <property type="match status" value="1"/>
</dbReference>
<dbReference type="PANTHER" id="PTHR43311:SF2">
    <property type="entry name" value="GLUTAMATE--TRNA LIGASE, MITOCHONDRIAL-RELATED"/>
    <property type="match status" value="1"/>
</dbReference>
<dbReference type="Pfam" id="PF19269">
    <property type="entry name" value="Anticodon_2"/>
    <property type="match status" value="1"/>
</dbReference>
<dbReference type="Pfam" id="PF00749">
    <property type="entry name" value="tRNA-synt_1c"/>
    <property type="match status" value="1"/>
</dbReference>
<dbReference type="PRINTS" id="PR00987">
    <property type="entry name" value="TRNASYNTHGLU"/>
</dbReference>
<dbReference type="SUPFAM" id="SSF48163">
    <property type="entry name" value="An anticodon-binding domain of class I aminoacyl-tRNA synthetases"/>
    <property type="match status" value="1"/>
</dbReference>
<dbReference type="SUPFAM" id="SSF52374">
    <property type="entry name" value="Nucleotidylyl transferase"/>
    <property type="match status" value="1"/>
</dbReference>
<dbReference type="PROSITE" id="PS00178">
    <property type="entry name" value="AA_TRNA_LIGASE_I"/>
    <property type="match status" value="1"/>
</dbReference>
<accession>B1M0I6</accession>
<feature type="chain" id="PRO_0000367712" description="Glutamate--tRNA ligase 2">
    <location>
        <begin position="1"/>
        <end position="446"/>
    </location>
</feature>
<feature type="short sequence motif" description="'HIGH' region" evidence="1">
    <location>
        <begin position="8"/>
        <end position="18"/>
    </location>
</feature>
<feature type="short sequence motif" description="'KMSKS' region" evidence="1">
    <location>
        <begin position="239"/>
        <end position="243"/>
    </location>
</feature>
<feature type="binding site" evidence="1">
    <location>
        <position position="242"/>
    </location>
    <ligand>
        <name>ATP</name>
        <dbReference type="ChEBI" id="CHEBI:30616"/>
    </ligand>
</feature>
<name>SYE2_METRJ</name>
<gene>
    <name evidence="1" type="primary">gltX2</name>
    <name type="ordered locus">Mrad2831_5563</name>
</gene>
<keyword id="KW-0030">Aminoacyl-tRNA synthetase</keyword>
<keyword id="KW-0067">ATP-binding</keyword>
<keyword id="KW-0963">Cytoplasm</keyword>
<keyword id="KW-0436">Ligase</keyword>
<keyword id="KW-0547">Nucleotide-binding</keyword>
<keyword id="KW-0648">Protein biosynthesis</keyword>
<organism>
    <name type="scientific">Methylobacterium radiotolerans (strain ATCC 27329 / DSM 1819 / JCM 2831 / NBRC 15690 / NCIMB 10815 / 0-1)</name>
    <dbReference type="NCBI Taxonomy" id="426355"/>
    <lineage>
        <taxon>Bacteria</taxon>
        <taxon>Pseudomonadati</taxon>
        <taxon>Pseudomonadota</taxon>
        <taxon>Alphaproteobacteria</taxon>
        <taxon>Hyphomicrobiales</taxon>
        <taxon>Methylobacteriaceae</taxon>
        <taxon>Methylobacterium</taxon>
    </lineage>
</organism>
<sequence length="446" mass="48358">MTLVRFAPSPTGYLHIGNARPALLNALFARRTGGRFLLRLDDTDAERSTEAFAEAIGEDLAWLGIVPDLFARQSARTAQHDAAADRLRAAGRLYPCYETPEELERRRRRQLGRGQPPIYDRAALRLTGDERAALEAEGRRPHWRFLLEARTVGWDDLVRGPAHVDCASLSDPVLIRADGSYLYTLPSVVDDADLGITHVIRGEDHVTNTGVQVQIFEALGAAVPVFGHHNLLTTADGEGLSKRLGHLSLRGLREAGYEPAAVRSLAVLTGSAESVRAVPDLDTLAGLVDLGEISRAPARFDPAELDGLNARLIHAMPYREAAARLADLGIPADRAEAFWLAVRANLSRVPEAAPWWRVVTGPVEPVLTEPAVIAAAVESLPPEPFGPETWNAWTTEIRTRTGAKGRGLFMPLRLALTGLEHGPDLAGLLPLIGRERAARRLSGAAA</sequence>
<proteinExistence type="inferred from homology"/>
<evidence type="ECO:0000255" key="1">
    <source>
        <dbReference type="HAMAP-Rule" id="MF_00022"/>
    </source>
</evidence>
<protein>
    <recommendedName>
        <fullName evidence="1">Glutamate--tRNA ligase 2</fullName>
        <ecNumber evidence="1">6.1.1.17</ecNumber>
    </recommendedName>
    <alternativeName>
        <fullName evidence="1">Glutamyl-tRNA synthetase 2</fullName>
        <shortName evidence="1">GluRS 2</shortName>
    </alternativeName>
</protein>
<comment type="function">
    <text evidence="1">Catalyzes the attachment of glutamate to tRNA(Glu) in a two-step reaction: glutamate is first activated by ATP to form Glu-AMP and then transferred to the acceptor end of tRNA(Glu).</text>
</comment>
<comment type="catalytic activity">
    <reaction evidence="1">
        <text>tRNA(Glu) + L-glutamate + ATP = L-glutamyl-tRNA(Glu) + AMP + diphosphate</text>
        <dbReference type="Rhea" id="RHEA:23540"/>
        <dbReference type="Rhea" id="RHEA-COMP:9663"/>
        <dbReference type="Rhea" id="RHEA-COMP:9680"/>
        <dbReference type="ChEBI" id="CHEBI:29985"/>
        <dbReference type="ChEBI" id="CHEBI:30616"/>
        <dbReference type="ChEBI" id="CHEBI:33019"/>
        <dbReference type="ChEBI" id="CHEBI:78442"/>
        <dbReference type="ChEBI" id="CHEBI:78520"/>
        <dbReference type="ChEBI" id="CHEBI:456215"/>
        <dbReference type="EC" id="6.1.1.17"/>
    </reaction>
</comment>
<comment type="subunit">
    <text evidence="1">Monomer.</text>
</comment>
<comment type="subcellular location">
    <subcellularLocation>
        <location evidence="1">Cytoplasm</location>
    </subcellularLocation>
</comment>
<comment type="similarity">
    <text evidence="1">Belongs to the class-I aminoacyl-tRNA synthetase family. Glutamate--tRNA ligase type 1 subfamily.</text>
</comment>